<gene>
    <name evidence="1 3" type="primary">ccmK3</name>
    <name type="ordered locus">slr1838</name>
</gene>
<feature type="chain" id="PRO_0000201508" description="Carboxysome shell protein CcmK3">
    <location>
        <begin position="1"/>
        <end position="103"/>
    </location>
</feature>
<feature type="domain" description="BMC" evidence="1">
    <location>
        <begin position="4"/>
        <end position="91"/>
    </location>
</feature>
<sequence>MPQAVGVIQTLGFPSVLAAADAMLKGGRVTLVYYDLAERGNFVVAIRGPVSEVNLSMKMGLAAVNESVMGGEIVSHYIVPNPPENVLAVLPVEYTEKVARFRT</sequence>
<dbReference type="EMBL" id="BA000022">
    <property type="protein sequence ID" value="BAA17446.1"/>
    <property type="molecule type" value="Genomic_DNA"/>
</dbReference>
<dbReference type="PIR" id="S77343">
    <property type="entry name" value="S77343"/>
</dbReference>
<dbReference type="SMR" id="P73406"/>
<dbReference type="IntAct" id="P73406">
    <property type="interactions" value="14"/>
</dbReference>
<dbReference type="STRING" id="1148.gene:10498310"/>
<dbReference type="PaxDb" id="1148-1652525"/>
<dbReference type="EnsemblBacteria" id="BAA17446">
    <property type="protein sequence ID" value="BAA17446"/>
    <property type="gene ID" value="BAA17446"/>
</dbReference>
<dbReference type="KEGG" id="syn:slr1838"/>
<dbReference type="eggNOG" id="COG4577">
    <property type="taxonomic scope" value="Bacteria"/>
</dbReference>
<dbReference type="InParanoid" id="P73406"/>
<dbReference type="PhylomeDB" id="P73406"/>
<dbReference type="Proteomes" id="UP000001425">
    <property type="component" value="Chromosome"/>
</dbReference>
<dbReference type="GO" id="GO:0031470">
    <property type="term" value="C:carboxysome"/>
    <property type="evidence" value="ECO:0007669"/>
    <property type="project" value="UniProtKB-SubCell"/>
</dbReference>
<dbReference type="GO" id="GO:0043886">
    <property type="term" value="F:structural constituent of carboxysome shell"/>
    <property type="evidence" value="ECO:0000353"/>
    <property type="project" value="UniProtKB"/>
</dbReference>
<dbReference type="GO" id="GO:0015977">
    <property type="term" value="P:carbon fixation"/>
    <property type="evidence" value="ECO:0007669"/>
    <property type="project" value="UniProtKB-UniRule"/>
</dbReference>
<dbReference type="GO" id="GO:0015979">
    <property type="term" value="P:photosynthesis"/>
    <property type="evidence" value="ECO:0007669"/>
    <property type="project" value="UniProtKB-KW"/>
</dbReference>
<dbReference type="CDD" id="cd07057">
    <property type="entry name" value="BMC_CcmK"/>
    <property type="match status" value="1"/>
</dbReference>
<dbReference type="Gene3D" id="3.30.70.1710">
    <property type="match status" value="1"/>
</dbReference>
<dbReference type="HAMAP" id="MF_00854">
    <property type="entry name" value="CcmK"/>
    <property type="match status" value="1"/>
</dbReference>
<dbReference type="InterPro" id="IPR020808">
    <property type="entry name" value="Bact_microcomp_CS"/>
</dbReference>
<dbReference type="InterPro" id="IPR000249">
    <property type="entry name" value="BMC_dom"/>
</dbReference>
<dbReference type="InterPro" id="IPR050575">
    <property type="entry name" value="BMC_shell"/>
</dbReference>
<dbReference type="InterPro" id="IPR046380">
    <property type="entry name" value="CcmK"/>
</dbReference>
<dbReference type="InterPro" id="IPR037233">
    <property type="entry name" value="CcmK-like_sf"/>
</dbReference>
<dbReference type="InterPro" id="IPR044872">
    <property type="entry name" value="CcmK/CsoS1_BMC"/>
</dbReference>
<dbReference type="PANTHER" id="PTHR33941:SF13">
    <property type="entry name" value="CARBOXYSOME SHELL PROTEIN CCMK4"/>
    <property type="match status" value="1"/>
</dbReference>
<dbReference type="PANTHER" id="PTHR33941">
    <property type="entry name" value="PROPANEDIOL UTILIZATION PROTEIN PDUA"/>
    <property type="match status" value="1"/>
</dbReference>
<dbReference type="Pfam" id="PF00936">
    <property type="entry name" value="BMC"/>
    <property type="match status" value="1"/>
</dbReference>
<dbReference type="SMART" id="SM00877">
    <property type="entry name" value="BMC"/>
    <property type="match status" value="1"/>
</dbReference>
<dbReference type="SUPFAM" id="SSF143414">
    <property type="entry name" value="CcmK-like"/>
    <property type="match status" value="1"/>
</dbReference>
<dbReference type="PROSITE" id="PS01139">
    <property type="entry name" value="BMC_1"/>
    <property type="match status" value="1"/>
</dbReference>
<dbReference type="PROSITE" id="PS51930">
    <property type="entry name" value="BMC_2"/>
    <property type="match status" value="1"/>
</dbReference>
<organism>
    <name type="scientific">Synechocystis sp. (strain ATCC 27184 / PCC 6803 / Kazusa)</name>
    <dbReference type="NCBI Taxonomy" id="1111708"/>
    <lineage>
        <taxon>Bacteria</taxon>
        <taxon>Bacillati</taxon>
        <taxon>Cyanobacteriota</taxon>
        <taxon>Cyanophyceae</taxon>
        <taxon>Synechococcales</taxon>
        <taxon>Merismopediaceae</taxon>
        <taxon>Synechocystis</taxon>
    </lineage>
</organism>
<protein>
    <recommendedName>
        <fullName evidence="1 3">Carboxysome shell protein CcmK3</fullName>
    </recommendedName>
    <alternativeName>
        <fullName evidence="1">Carbon dioxide-concentrating mechanism protein CcmK3</fullName>
    </alternativeName>
</protein>
<reference key="1">
    <citation type="journal article" date="1996" name="DNA Res.">
        <title>Sequence analysis of the genome of the unicellular cyanobacterium Synechocystis sp. strain PCC6803. II. Sequence determination of the entire genome and assignment of potential protein-coding regions.</title>
        <authorList>
            <person name="Kaneko T."/>
            <person name="Sato S."/>
            <person name="Kotani H."/>
            <person name="Tanaka A."/>
            <person name="Asamizu E."/>
            <person name="Nakamura Y."/>
            <person name="Miyajima N."/>
            <person name="Hirosawa M."/>
            <person name="Sugiura M."/>
            <person name="Sasamoto S."/>
            <person name="Kimura T."/>
            <person name="Hosouchi T."/>
            <person name="Matsuno A."/>
            <person name="Muraki A."/>
            <person name="Nakazaki N."/>
            <person name="Naruo K."/>
            <person name="Okumura S."/>
            <person name="Shimpo S."/>
            <person name="Takeuchi C."/>
            <person name="Wada T."/>
            <person name="Watanabe A."/>
            <person name="Yamada M."/>
            <person name="Yasuda M."/>
            <person name="Tabata S."/>
        </authorList>
    </citation>
    <scope>NUCLEOTIDE SEQUENCE [LARGE SCALE GENOMIC DNA]</scope>
    <source>
        <strain>ATCC 27184 / PCC 6803 / Kazusa</strain>
    </source>
</reference>
<reference key="2">
    <citation type="journal article" date="2019" name="PLoS ONE">
        <title>Occurrence and stability of hetero-hexamer associations formed by beta-carboxysome CcmK shell components.</title>
        <authorList>
            <person name="Garcia-Alles L.F."/>
            <person name="Root K."/>
            <person name="Maveyraud L."/>
            <person name="Aubry N."/>
            <person name="Lesniewska E."/>
            <person name="Mourey L."/>
            <person name="Zenobi R."/>
            <person name="Truan G."/>
        </authorList>
    </citation>
    <scope>SUBUNIT</scope>
    <source>
        <strain>ATCC 27184 / PCC 6803 / Kazusa</strain>
    </source>
</reference>
<evidence type="ECO:0000255" key="1">
    <source>
        <dbReference type="HAMAP-Rule" id="MF_00854"/>
    </source>
</evidence>
<evidence type="ECO:0000269" key="2">
    <source>
    </source>
</evidence>
<evidence type="ECO:0000303" key="3">
    <source>
    </source>
</evidence>
<evidence type="ECO:0000305" key="4"/>
<evidence type="ECO:0000305" key="5">
    <source>
    </source>
</evidence>
<keyword id="KW-1283">Bacterial microcompartment</keyword>
<keyword id="KW-0120">Carbon dioxide fixation</keyword>
<keyword id="KW-1282">Carboxysome</keyword>
<keyword id="KW-0602">Photosynthesis</keyword>
<keyword id="KW-1185">Reference proteome</keyword>
<proteinExistence type="evidence at protein level"/>
<comment type="function">
    <text evidence="5">A probably minor shell protein component of the carboxysome, a polyhedral inclusion where RuBisCO (ribulose bisphosphate carboxylase, rbcL-rbcS) is sequestered. This subunit probably does not form homohexamers.</text>
</comment>
<comment type="subunit">
    <text evidence="2 5">Forms mixed heterohexamers with CcmK4, probably with 1:5 CcmK3:CcmK4 stoichiometry. Only very weak interactions with CcmK1 and CcmK2 were seen (PubMed:31603944). Bulky residues in the pore region probably preclude the formation of homohexamers by this subunit (Probable).</text>
</comment>
<comment type="subcellular location">
    <subcellularLocation>
        <location evidence="1">Carboxysome</location>
    </subcellularLocation>
    <text evidence="4">This cyanobacterium makes beta-type carboxysomes.</text>
</comment>
<comment type="similarity">
    <text evidence="1">Belongs to the bacterial microcompartments protein family. CcmK subfamily.</text>
</comment>
<accession>P73406</accession>
<name>CCMK3_SYNY3</name>